<evidence type="ECO:0000250" key="1"/>
<gene>
    <name type="primary">vorB</name>
    <name type="ordered locus">PYRAB13650</name>
    <name type="ORF">PAB1473</name>
</gene>
<organism>
    <name type="scientific">Pyrococcus abyssi (strain GE5 / Orsay)</name>
    <dbReference type="NCBI Taxonomy" id="272844"/>
    <lineage>
        <taxon>Archaea</taxon>
        <taxon>Methanobacteriati</taxon>
        <taxon>Methanobacteriota</taxon>
        <taxon>Thermococci</taxon>
        <taxon>Thermococcales</taxon>
        <taxon>Thermococcaceae</taxon>
        <taxon>Pyrococcus</taxon>
    </lineage>
</organism>
<dbReference type="EC" id="1.2.7.7"/>
<dbReference type="EMBL" id="AJ248287">
    <property type="protein sequence ID" value="CAB50270.1"/>
    <property type="molecule type" value="Genomic_DNA"/>
</dbReference>
<dbReference type="EMBL" id="HE613800">
    <property type="protein sequence ID" value="CCE70808.1"/>
    <property type="molecule type" value="Genomic_DNA"/>
</dbReference>
<dbReference type="PIR" id="A75047">
    <property type="entry name" value="A75047"/>
</dbReference>
<dbReference type="RefSeq" id="WP_010868480.1">
    <property type="nucleotide sequence ID" value="NC_000868.1"/>
</dbReference>
<dbReference type="SMR" id="Q9UYZ2"/>
<dbReference type="STRING" id="272844.PAB1473"/>
<dbReference type="KEGG" id="pab:PAB1473"/>
<dbReference type="PATRIC" id="fig|272844.11.peg.1451"/>
<dbReference type="eggNOG" id="arCOG01601">
    <property type="taxonomic scope" value="Archaea"/>
</dbReference>
<dbReference type="HOGENOM" id="CLU_058423_0_0_2"/>
<dbReference type="OrthoDB" id="296931at2157"/>
<dbReference type="PhylomeDB" id="Q9UYZ2"/>
<dbReference type="Proteomes" id="UP000000810">
    <property type="component" value="Chromosome"/>
</dbReference>
<dbReference type="Proteomes" id="UP000009139">
    <property type="component" value="Chromosome"/>
</dbReference>
<dbReference type="GO" id="GO:0043807">
    <property type="term" value="F:3-methyl-2-oxobutanoate dehydrogenase (ferredoxin) activity"/>
    <property type="evidence" value="ECO:0007669"/>
    <property type="project" value="UniProtKB-EC"/>
</dbReference>
<dbReference type="GO" id="GO:0030976">
    <property type="term" value="F:thiamine pyrophosphate binding"/>
    <property type="evidence" value="ECO:0007669"/>
    <property type="project" value="InterPro"/>
</dbReference>
<dbReference type="GO" id="GO:0006082">
    <property type="term" value="P:organic acid metabolic process"/>
    <property type="evidence" value="ECO:0007669"/>
    <property type="project" value="UniProtKB-ARBA"/>
</dbReference>
<dbReference type="GO" id="GO:0044272">
    <property type="term" value="P:sulfur compound biosynthetic process"/>
    <property type="evidence" value="ECO:0007669"/>
    <property type="project" value="UniProtKB-ARBA"/>
</dbReference>
<dbReference type="CDD" id="cd03376">
    <property type="entry name" value="TPP_PFOR_porB_like"/>
    <property type="match status" value="1"/>
</dbReference>
<dbReference type="Gene3D" id="3.40.50.970">
    <property type="match status" value="2"/>
</dbReference>
<dbReference type="InterPro" id="IPR051479">
    <property type="entry name" value="PorB-like"/>
</dbReference>
<dbReference type="InterPro" id="IPR029061">
    <property type="entry name" value="THDP-binding"/>
</dbReference>
<dbReference type="InterPro" id="IPR011766">
    <property type="entry name" value="TPP_enzyme_TPP-bd"/>
</dbReference>
<dbReference type="NCBIfam" id="NF008818">
    <property type="entry name" value="PRK11864.1"/>
    <property type="match status" value="1"/>
</dbReference>
<dbReference type="PANTHER" id="PTHR42897">
    <property type="entry name" value="PYRUVATE SYNTHASE SUBUNIT PORB"/>
    <property type="match status" value="1"/>
</dbReference>
<dbReference type="PANTHER" id="PTHR42897:SF2">
    <property type="entry name" value="PYRUVATE SYNTHASE SUBUNIT PORB"/>
    <property type="match status" value="1"/>
</dbReference>
<dbReference type="Pfam" id="PF02775">
    <property type="entry name" value="TPP_enzyme_C"/>
    <property type="match status" value="1"/>
</dbReference>
<dbReference type="SUPFAM" id="SSF52518">
    <property type="entry name" value="Thiamin diphosphate-binding fold (THDP-binding)"/>
    <property type="match status" value="1"/>
</dbReference>
<sequence>MEVPEDVKRRLTLPFEENFFAGHTACQGCGASLGLRYVLKAYGRKTILVIPACCSTIIAGPWPYSALNANLFHTAFETTGAVISGIEAALKALGYKVKGEDGIMVVGWAGDGGTADIGLQALSGFLERGHDALYIMYDNEAYMNTGIQRSSSTPYGAWTTNTPGGKRHFLEKRHKKKVIDIVIAHRIPYAATASVAYPEDFLRKLKKAQKIPGPSFIQLFAPCPTGWRAPTDKTIEIARLAVQTAYFPLFEYENGKYKINMPNPKKEPKPIEEFLKLQGRFKYMTKEDIEVLQKWVLEEWERLKKLAEVFG</sequence>
<feature type="chain" id="PRO_0000099956" description="Ketoisovalerate oxidoreductase subunit VorB">
    <location>
        <begin position="1"/>
        <end position="311"/>
    </location>
</feature>
<reference key="1">
    <citation type="journal article" date="2003" name="Mol. Microbiol.">
        <title>An integrated analysis of the genome of the hyperthermophilic archaeon Pyrococcus abyssi.</title>
        <authorList>
            <person name="Cohen G.N."/>
            <person name="Barbe V."/>
            <person name="Flament D."/>
            <person name="Galperin M."/>
            <person name="Heilig R."/>
            <person name="Lecompte O."/>
            <person name="Poch O."/>
            <person name="Prieur D."/>
            <person name="Querellou J."/>
            <person name="Ripp R."/>
            <person name="Thierry J.-C."/>
            <person name="Van der Oost J."/>
            <person name="Weissenbach J."/>
            <person name="Zivanovic Y."/>
            <person name="Forterre P."/>
        </authorList>
    </citation>
    <scope>NUCLEOTIDE SEQUENCE [LARGE SCALE GENOMIC DNA]</scope>
    <source>
        <strain>GE5 / Orsay</strain>
    </source>
</reference>
<reference key="2">
    <citation type="journal article" date="2012" name="Curr. Microbiol.">
        <title>Re-annotation of two hyperthermophilic archaea Pyrococcus abyssi GE5 and Pyrococcus furiosus DSM 3638.</title>
        <authorList>
            <person name="Gao J."/>
            <person name="Wang J."/>
        </authorList>
    </citation>
    <scope>GENOME REANNOTATION</scope>
    <source>
        <strain>GE5 / Orsay</strain>
    </source>
</reference>
<name>VORB_PYRAB</name>
<comment type="catalytic activity">
    <reaction>
        <text>3-methyl-2-oxobutanoate + 2 oxidized [2Fe-2S]-[ferredoxin] + CoA = 2-methylpropanoyl-CoA + 2 reduced [2Fe-2S]-[ferredoxin] + CO2 + H(+)</text>
        <dbReference type="Rhea" id="RHEA:11712"/>
        <dbReference type="Rhea" id="RHEA-COMP:10000"/>
        <dbReference type="Rhea" id="RHEA-COMP:10001"/>
        <dbReference type="ChEBI" id="CHEBI:11851"/>
        <dbReference type="ChEBI" id="CHEBI:15378"/>
        <dbReference type="ChEBI" id="CHEBI:16526"/>
        <dbReference type="ChEBI" id="CHEBI:33737"/>
        <dbReference type="ChEBI" id="CHEBI:33738"/>
        <dbReference type="ChEBI" id="CHEBI:57287"/>
        <dbReference type="ChEBI" id="CHEBI:57338"/>
        <dbReference type="EC" id="1.2.7.7"/>
    </reaction>
</comment>
<comment type="subunit">
    <text evidence="1">Heterotetramer of one alpha, one beta, one delta and one gamma chain.</text>
</comment>
<protein>
    <recommendedName>
        <fullName>Ketoisovalerate oxidoreductase subunit VorB</fullName>
        <shortName>VOR</shortName>
        <ecNumber>1.2.7.7</ecNumber>
    </recommendedName>
    <alternativeName>
        <fullName>2-oxoisovalerate ferredoxin reductase subunit beta</fullName>
    </alternativeName>
    <alternativeName>
        <fullName>2-oxoisovalerate oxidoreductase beta chain</fullName>
    </alternativeName>
</protein>
<proteinExistence type="inferred from homology"/>
<keyword id="KW-0560">Oxidoreductase</keyword>
<accession>Q9UYZ2</accession>
<accession>G8ZHH1</accession>